<feature type="signal peptide" evidence="2">
    <location>
        <begin position="1"/>
        <end position="24"/>
    </location>
</feature>
<feature type="chain" id="PRO_0000020673" description="Alginate biosynthesis protein AlgX">
    <location>
        <begin position="25"/>
        <end position="479"/>
    </location>
</feature>
<feature type="region of interest" description="SGNH hydrolase-like domain">
    <location>
        <begin position="24"/>
        <end position="349"/>
    </location>
</feature>
<feature type="region of interest" description="CBM domain">
    <location>
        <begin position="350"/>
        <end position="476"/>
    </location>
</feature>
<feature type="active site" evidence="1">
    <location>
        <position position="176"/>
    </location>
</feature>
<feature type="active site" description="Proton acceptor" evidence="1">
    <location>
        <position position="178"/>
    </location>
</feature>
<feature type="active site" description="Nucleophile" evidence="1">
    <location>
        <position position="271"/>
    </location>
</feature>
<feature type="disulfide bond" evidence="1">
    <location>
        <begin position="41"/>
        <end position="231"/>
    </location>
</feature>
<feature type="disulfide bond" evidence="1">
    <location>
        <begin position="349"/>
        <end position="463"/>
    </location>
</feature>
<feature type="helix" evidence="4">
    <location>
        <begin position="42"/>
        <end position="45"/>
    </location>
</feature>
<feature type="helix" evidence="4">
    <location>
        <begin position="47"/>
        <end position="49"/>
    </location>
</feature>
<feature type="helix" evidence="4">
    <location>
        <begin position="55"/>
        <end position="58"/>
    </location>
</feature>
<feature type="strand" evidence="4">
    <location>
        <begin position="60"/>
        <end position="63"/>
    </location>
</feature>
<feature type="strand" evidence="4">
    <location>
        <begin position="69"/>
        <end position="71"/>
    </location>
</feature>
<feature type="helix" evidence="4">
    <location>
        <begin position="72"/>
        <end position="75"/>
    </location>
</feature>
<feature type="helix" evidence="4">
    <location>
        <begin position="84"/>
        <end position="99"/>
    </location>
</feature>
<feature type="strand" evidence="4">
    <location>
        <begin position="103"/>
        <end position="108"/>
    </location>
</feature>
<feature type="helix" evidence="4">
    <location>
        <begin position="112"/>
        <end position="116"/>
    </location>
</feature>
<feature type="helix" evidence="4">
    <location>
        <begin position="117"/>
        <end position="119"/>
    </location>
</feature>
<feature type="helix" evidence="4">
    <location>
        <begin position="122"/>
        <end position="127"/>
    </location>
</feature>
<feature type="helix" evidence="4">
    <location>
        <begin position="130"/>
        <end position="146"/>
    </location>
</feature>
<feature type="helix" evidence="4">
    <location>
        <begin position="155"/>
        <end position="157"/>
    </location>
</feature>
<feature type="helix" evidence="4">
    <location>
        <begin position="164"/>
        <end position="166"/>
    </location>
</feature>
<feature type="strand" evidence="4">
    <location>
        <begin position="176"/>
        <end position="179"/>
    </location>
</feature>
<feature type="helix" evidence="4">
    <location>
        <begin position="181"/>
        <end position="196"/>
    </location>
</feature>
<feature type="helix" evidence="4">
    <location>
        <begin position="199"/>
        <end position="201"/>
    </location>
</feature>
<feature type="strand" evidence="4">
    <location>
        <begin position="210"/>
        <end position="219"/>
    </location>
</feature>
<feature type="helix" evidence="4">
    <location>
        <begin position="222"/>
        <end position="231"/>
    </location>
</feature>
<feature type="strand" evidence="4">
    <location>
        <begin position="238"/>
        <end position="246"/>
    </location>
</feature>
<feature type="strand" evidence="4">
    <location>
        <begin position="264"/>
        <end position="268"/>
    </location>
</feature>
<feature type="helix" evidence="4">
    <location>
        <begin position="271"/>
        <end position="273"/>
    </location>
</feature>
<feature type="turn" evidence="4">
    <location>
        <begin position="275"/>
        <end position="277"/>
    </location>
</feature>
<feature type="helix" evidence="4">
    <location>
        <begin position="279"/>
        <end position="287"/>
    </location>
</feature>
<feature type="strand" evidence="4">
    <location>
        <begin position="291"/>
        <end position="293"/>
    </location>
</feature>
<feature type="turn" evidence="4">
    <location>
        <begin position="300"/>
        <end position="302"/>
    </location>
</feature>
<feature type="helix" evidence="4">
    <location>
        <begin position="303"/>
        <end position="309"/>
    </location>
</feature>
<feature type="helix" evidence="4">
    <location>
        <begin position="312"/>
        <end position="316"/>
    </location>
</feature>
<feature type="strand" evidence="4">
    <location>
        <begin position="320"/>
        <end position="326"/>
    </location>
</feature>
<feature type="helix" evidence="4">
    <location>
        <begin position="335"/>
        <end position="345"/>
    </location>
</feature>
<feature type="turn" evidence="4">
    <location>
        <begin position="346"/>
        <end position="349"/>
    </location>
</feature>
<feature type="strand" evidence="4">
    <location>
        <begin position="350"/>
        <end position="352"/>
    </location>
</feature>
<feature type="strand" evidence="4">
    <location>
        <begin position="355"/>
        <end position="362"/>
    </location>
</feature>
<feature type="strand" evidence="4">
    <location>
        <begin position="364"/>
        <end position="371"/>
    </location>
</feature>
<feature type="helix" evidence="4">
    <location>
        <begin position="383"/>
        <end position="385"/>
    </location>
</feature>
<feature type="strand" evidence="4">
    <location>
        <begin position="386"/>
        <end position="394"/>
    </location>
</feature>
<feature type="strand" evidence="4">
    <location>
        <begin position="399"/>
        <end position="406"/>
    </location>
</feature>
<feature type="helix" evidence="4">
    <location>
        <begin position="407"/>
        <end position="409"/>
    </location>
</feature>
<feature type="strand" evidence="4">
    <location>
        <begin position="411"/>
        <end position="417"/>
    </location>
</feature>
<feature type="strand" evidence="4">
    <location>
        <begin position="420"/>
        <end position="422"/>
    </location>
</feature>
<feature type="strand" evidence="4">
    <location>
        <begin position="426"/>
        <end position="431"/>
    </location>
</feature>
<feature type="helix" evidence="4">
    <location>
        <begin position="438"/>
        <end position="440"/>
    </location>
</feature>
<feature type="strand" evidence="4">
    <location>
        <begin position="442"/>
        <end position="449"/>
    </location>
</feature>
<feature type="strand" evidence="4">
    <location>
        <begin position="452"/>
        <end position="454"/>
    </location>
</feature>
<feature type="strand" evidence="4">
    <location>
        <begin position="456"/>
        <end position="464"/>
    </location>
</feature>
<protein>
    <recommendedName>
        <fullName>Alginate biosynthesis protein AlgX</fullName>
    </recommendedName>
    <alternativeName>
        <fullName>Probable alginate O-acetyltransferase AlgX</fullName>
        <ecNumber>2.3.1.-</ecNumber>
    </alternativeName>
</protein>
<comment type="function">
    <text evidence="1">Plays two roles in the biosynthesis of the exopolysaccharide alginate: protects alginate from degradation as the polymer traverses the periplasm, and also plays a role in its O-acetylation. Probably has acetyltransferase activity in vivo (By similarity).</text>
</comment>
<comment type="pathway">
    <text>Glycan biosynthesis; alginate biosynthesis.</text>
</comment>
<comment type="subunit">
    <text evidence="1">Monomer.</text>
</comment>
<comment type="subcellular location">
    <subcellularLocation>
        <location evidence="1">Periplasm</location>
    </subcellularLocation>
</comment>
<comment type="domain">
    <text evidence="1">Consists of two domains, with an N-terminal domain with structural homology to members of the SGNH (GDSL) hydrolase superfamily and a C-terminal carbohydrate-binding module (CBM) that may bind alginate.</text>
</comment>
<comment type="similarity">
    <text evidence="3">Belongs to the AlgX family.</text>
</comment>
<evidence type="ECO:0000250" key="1"/>
<evidence type="ECO:0000255" key="2"/>
<evidence type="ECO:0000305" key="3"/>
<evidence type="ECO:0007829" key="4">
    <source>
        <dbReference type="PDB" id="7ULA"/>
    </source>
</evidence>
<keyword id="KW-0002">3D-structure</keyword>
<keyword id="KW-0012">Acyltransferase</keyword>
<keyword id="KW-0016">Alginate biosynthesis</keyword>
<keyword id="KW-1015">Disulfide bond</keyword>
<keyword id="KW-0574">Periplasm</keyword>
<keyword id="KW-1185">Reference proteome</keyword>
<keyword id="KW-0732">Signal</keyword>
<keyword id="KW-0808">Transferase</keyword>
<organism>
    <name type="scientific">Pseudomonas putida (strain ATCC 47054 / DSM 6125 / CFBP 8728 / NCIMB 11950 / KT2440)</name>
    <dbReference type="NCBI Taxonomy" id="160488"/>
    <lineage>
        <taxon>Bacteria</taxon>
        <taxon>Pseudomonadati</taxon>
        <taxon>Pseudomonadota</taxon>
        <taxon>Gammaproteobacteria</taxon>
        <taxon>Pseudomonadales</taxon>
        <taxon>Pseudomonadaceae</taxon>
        <taxon>Pseudomonas</taxon>
    </lineage>
</organism>
<name>ALGX_PSEPK</name>
<sequence>MTPHLMKLLGLSAALLAISQGVRAEDVKAPTFSAEPCCQLCPEAHDASRYTTRYQQNFTTLVQAQGDWLFRTREDLRTEFNTTPAGYKRLQQVHDAFKKRGVELVVVYQPTRGLVNRNMLNPAEKAAFDYQKALGNYQAMLKRFASMGYNVPDLSPLTNEQLAAADQGKDFYFRGDQHWTPYGAERAAKIVADTVHKMPAFEGIPRKEFETRKSGRMGKTGTLHNVAGQLCGTSYAVQYMDQFATEPKGASGGDDLFGDSGNAQITLVGTSHSGKNYNFSGFLEQYIGADVLNVAFPGGGLEGSMIQYLGSEEFQKNPPKILIWEFSPLYRLDQETIWRQILGLLDDGCDDRPALMSASTTLKPGKNELMVNGKGGVIKDLINRNLQMDVKFEDPSVKVLQATLWYLNGRHEDIKLEKPETSDTDGRFVFQMREDEDWASQRLLAFEVQGPESGTQKVEAKLCKRNNFAVPAQTAQAGQ</sequence>
<reference key="1">
    <citation type="journal article" date="2002" name="Environ. Microbiol.">
        <title>Complete genome sequence and comparative analysis of the metabolically versatile Pseudomonas putida KT2440.</title>
        <authorList>
            <person name="Nelson K.E."/>
            <person name="Weinel C."/>
            <person name="Paulsen I.T."/>
            <person name="Dodson R.J."/>
            <person name="Hilbert H."/>
            <person name="Martins dos Santos V.A.P."/>
            <person name="Fouts D.E."/>
            <person name="Gill S.R."/>
            <person name="Pop M."/>
            <person name="Holmes M."/>
            <person name="Brinkac L.M."/>
            <person name="Beanan M.J."/>
            <person name="DeBoy R.T."/>
            <person name="Daugherty S.C."/>
            <person name="Kolonay J.F."/>
            <person name="Madupu R."/>
            <person name="Nelson W.C."/>
            <person name="White O."/>
            <person name="Peterson J.D."/>
            <person name="Khouri H.M."/>
            <person name="Hance I."/>
            <person name="Chris Lee P."/>
            <person name="Holtzapple E.K."/>
            <person name="Scanlan D."/>
            <person name="Tran K."/>
            <person name="Moazzez A."/>
            <person name="Utterback T.R."/>
            <person name="Rizzo M."/>
            <person name="Lee K."/>
            <person name="Kosack D."/>
            <person name="Moestl D."/>
            <person name="Wedler H."/>
            <person name="Lauber J."/>
            <person name="Stjepandic D."/>
            <person name="Hoheisel J."/>
            <person name="Straetz M."/>
            <person name="Heim S."/>
            <person name="Kiewitz C."/>
            <person name="Eisen J.A."/>
            <person name="Timmis K.N."/>
            <person name="Duesterhoeft A."/>
            <person name="Tuemmler B."/>
            <person name="Fraser C.M."/>
        </authorList>
    </citation>
    <scope>NUCLEOTIDE SEQUENCE [LARGE SCALE GENOMIC DNA]</scope>
    <source>
        <strain>ATCC 47054 / DSM 6125 / CFBP 8728 / NCIMB 11950 / KT2440</strain>
    </source>
</reference>
<proteinExistence type="evidence at protein level"/>
<gene>
    <name type="primary">algX</name>
    <name type="ordered locus">PP_1282</name>
</gene>
<dbReference type="EC" id="2.3.1.-"/>
<dbReference type="EMBL" id="AE015451">
    <property type="protein sequence ID" value="AAN66906.1"/>
    <property type="molecule type" value="Genomic_DNA"/>
</dbReference>
<dbReference type="RefSeq" id="NP_743442.1">
    <property type="nucleotide sequence ID" value="NC_002947.4"/>
</dbReference>
<dbReference type="RefSeq" id="WP_010952411.1">
    <property type="nucleotide sequence ID" value="NZ_CP169744.1"/>
</dbReference>
<dbReference type="PDB" id="7ULA">
    <property type="method" value="X-ray"/>
    <property type="resolution" value="2.46 A"/>
    <property type="chains" value="A=1-479"/>
</dbReference>
<dbReference type="PDBsum" id="7ULA"/>
<dbReference type="SMR" id="Q88ND0"/>
<dbReference type="STRING" id="160488.PP_1282"/>
<dbReference type="PaxDb" id="160488-PP_1282"/>
<dbReference type="KEGG" id="ppu:PP_1282"/>
<dbReference type="PATRIC" id="fig|160488.4.peg.1359"/>
<dbReference type="eggNOG" id="ENOG502Z8PP">
    <property type="taxonomic scope" value="Bacteria"/>
</dbReference>
<dbReference type="HOGENOM" id="CLU_651753_0_0_6"/>
<dbReference type="OrthoDB" id="6773032at2"/>
<dbReference type="PhylomeDB" id="Q88ND0"/>
<dbReference type="BioCyc" id="PPUT160488:G1G01-1369-MONOMER"/>
<dbReference type="UniPathway" id="UPA00286"/>
<dbReference type="Proteomes" id="UP000000556">
    <property type="component" value="Chromosome"/>
</dbReference>
<dbReference type="GO" id="GO:0042597">
    <property type="term" value="C:periplasmic space"/>
    <property type="evidence" value="ECO:0007669"/>
    <property type="project" value="UniProtKB-SubCell"/>
</dbReference>
<dbReference type="GO" id="GO:0016746">
    <property type="term" value="F:acyltransferase activity"/>
    <property type="evidence" value="ECO:0007669"/>
    <property type="project" value="UniProtKB-KW"/>
</dbReference>
<dbReference type="GO" id="GO:0042121">
    <property type="term" value="P:alginic acid biosynthetic process"/>
    <property type="evidence" value="ECO:0007669"/>
    <property type="project" value="UniProtKB-UniPathway"/>
</dbReference>
<dbReference type="CDD" id="cd14487">
    <property type="entry name" value="AlgX_C"/>
    <property type="match status" value="1"/>
</dbReference>
<dbReference type="CDD" id="cd14441">
    <property type="entry name" value="AlgX_N"/>
    <property type="match status" value="1"/>
</dbReference>
<dbReference type="Gene3D" id="2.60.120.1380">
    <property type="entry name" value="C-terminal carbohydrate-binding module"/>
    <property type="match status" value="1"/>
</dbReference>
<dbReference type="InterPro" id="IPR031811">
    <property type="entry name" value="ALGX/ALGJ_SGNH-like"/>
</dbReference>
<dbReference type="InterPro" id="IPR031798">
    <property type="entry name" value="AlgX_C"/>
</dbReference>
<dbReference type="InterPro" id="IPR038639">
    <property type="entry name" value="AlgX_C_sf"/>
</dbReference>
<dbReference type="InterPro" id="IPR034655">
    <property type="entry name" value="AlgX_N"/>
</dbReference>
<dbReference type="Pfam" id="PF16822">
    <property type="entry name" value="ALGX"/>
    <property type="match status" value="1"/>
</dbReference>
<dbReference type="Pfam" id="PF16824">
    <property type="entry name" value="CBM_26"/>
    <property type="match status" value="1"/>
</dbReference>
<accession>Q88ND0</accession>